<protein>
    <recommendedName>
        <fullName>Bowman-Birk type proteinase inhibitor DE-4</fullName>
        <shortName>DE4</shortName>
    </recommendedName>
</protein>
<reference key="1">
    <citation type="journal article" date="1984" name="Phytochemistry">
        <title>Proteinase inhibitors from Lonchocarpus capassa (apple-leaf) seed.</title>
        <authorList>
            <person name="Joubert F.J."/>
        </authorList>
    </citation>
    <scope>PROTEIN SEQUENCE</scope>
    <source>
        <tissue>Seed</tissue>
    </source>
</reference>
<name>IBB4_PHIVI</name>
<dbReference type="MEROPS" id="I12.008"/>
<dbReference type="GO" id="GO:0005576">
    <property type="term" value="C:extracellular region"/>
    <property type="evidence" value="ECO:0007669"/>
    <property type="project" value="InterPro"/>
</dbReference>
<dbReference type="GO" id="GO:0004867">
    <property type="term" value="F:serine-type endopeptidase inhibitor activity"/>
    <property type="evidence" value="ECO:0007669"/>
    <property type="project" value="UniProtKB-KW"/>
</dbReference>
<dbReference type="CDD" id="cd00023">
    <property type="entry name" value="BBI"/>
    <property type="match status" value="1"/>
</dbReference>
<dbReference type="FunFam" id="2.10.69.10:FF:000001">
    <property type="entry name" value="Bowman-Birk type proteinase inhibitor"/>
    <property type="match status" value="1"/>
</dbReference>
<dbReference type="Gene3D" id="2.10.69.10">
    <property type="entry name" value="Cysteine Protease (Bromelain) Inhibitor, subunit H"/>
    <property type="match status" value="1"/>
</dbReference>
<dbReference type="InterPro" id="IPR035995">
    <property type="entry name" value="Bowman-Birk_prot_inh"/>
</dbReference>
<dbReference type="InterPro" id="IPR000877">
    <property type="entry name" value="Prot_inh_BBI"/>
</dbReference>
<dbReference type="Pfam" id="PF00228">
    <property type="entry name" value="Bowman-Birk_leg"/>
    <property type="match status" value="2"/>
</dbReference>
<dbReference type="SMART" id="SM00269">
    <property type="entry name" value="BowB"/>
    <property type="match status" value="1"/>
</dbReference>
<dbReference type="SUPFAM" id="SSF57247">
    <property type="entry name" value="Bowman-Birk inhibitor, BBI"/>
    <property type="match status" value="1"/>
</dbReference>
<dbReference type="PROSITE" id="PS00281">
    <property type="entry name" value="BOWMAN_BIRK"/>
    <property type="match status" value="1"/>
</dbReference>
<accession>P16343</accession>
<keyword id="KW-0903">Direct protein sequencing</keyword>
<keyword id="KW-1015">Disulfide bond</keyword>
<keyword id="KW-0646">Protease inhibitor</keyword>
<keyword id="KW-0722">Serine protease inhibitor</keyword>
<feature type="chain" id="PRO_0000105843" description="Bowman-Birk type proteinase inhibitor DE-4">
    <location>
        <begin position="1"/>
        <end position="80"/>
    </location>
</feature>
<feature type="region of interest" description="Disordered" evidence="3">
    <location>
        <begin position="1"/>
        <end position="29"/>
    </location>
</feature>
<feature type="compositionally biased region" description="Acidic residues" evidence="3">
    <location>
        <begin position="1"/>
        <end position="10"/>
    </location>
</feature>
<feature type="compositionally biased region" description="Low complexity" evidence="3">
    <location>
        <begin position="15"/>
        <end position="29"/>
    </location>
</feature>
<feature type="site" description="Reactive bond for trypsin" evidence="1">
    <location>
        <begin position="25"/>
        <end position="26"/>
    </location>
</feature>
<feature type="site" description="Reactive bond for chymotrypsin" evidence="1">
    <location>
        <begin position="52"/>
        <end position="53"/>
    </location>
</feature>
<feature type="disulfide bond" evidence="2">
    <location>
        <begin position="18"/>
        <end position="71"/>
    </location>
</feature>
<feature type="disulfide bond" evidence="2">
    <location>
        <begin position="19"/>
        <end position="33"/>
    </location>
</feature>
<feature type="disulfide bond" evidence="2">
    <location>
        <begin position="22"/>
        <end position="67"/>
    </location>
</feature>
<feature type="disulfide bond" evidence="2">
    <location>
        <begin position="23"/>
        <end position="31"/>
    </location>
</feature>
<feature type="disulfide bond" evidence="2">
    <location>
        <begin position="41"/>
        <end position="48"/>
    </location>
</feature>
<feature type="disulfide bond" evidence="2">
    <location>
        <begin position="45"/>
        <end position="60"/>
    </location>
</feature>
<feature type="disulfide bond" evidence="2">
    <location>
        <begin position="50"/>
        <end position="58"/>
    </location>
</feature>
<comment type="similarity">
    <text evidence="4">Belongs to the Bowman-Birk serine protease inhibitor family.</text>
</comment>
<sequence length="80" mass="8806">DDDHSDDEPRESESSKPCCSSCCTRSRPPQCQCTDVRLNSCHSACKSCMCTFSDPGMCSCLDVTDFCYKPCKSSGDDDZZ</sequence>
<organism>
    <name type="scientific">Philenoptera violacea</name>
    <name type="common">Apple-leaf</name>
    <name type="synonym">Capassa violacea</name>
    <dbReference type="NCBI Taxonomy" id="3926"/>
    <lineage>
        <taxon>Eukaryota</taxon>
        <taxon>Viridiplantae</taxon>
        <taxon>Streptophyta</taxon>
        <taxon>Embryophyta</taxon>
        <taxon>Tracheophyta</taxon>
        <taxon>Spermatophyta</taxon>
        <taxon>Magnoliopsida</taxon>
        <taxon>eudicotyledons</taxon>
        <taxon>Gunneridae</taxon>
        <taxon>Pentapetalae</taxon>
        <taxon>rosids</taxon>
        <taxon>fabids</taxon>
        <taxon>Fabales</taxon>
        <taxon>Fabaceae</taxon>
        <taxon>Papilionoideae</taxon>
        <taxon>50 kb inversion clade</taxon>
        <taxon>NPAAA clade</taxon>
        <taxon>indigoferoid/millettioid clade</taxon>
        <taxon>Millettieae</taxon>
        <taxon>Philenoptera</taxon>
    </lineage>
</organism>
<proteinExistence type="evidence at protein level"/>
<evidence type="ECO:0000250" key="1"/>
<evidence type="ECO:0000250" key="2">
    <source>
        <dbReference type="UniProtKB" id="P80321"/>
    </source>
</evidence>
<evidence type="ECO:0000256" key="3">
    <source>
        <dbReference type="SAM" id="MobiDB-lite"/>
    </source>
</evidence>
<evidence type="ECO:0000305" key="4"/>